<name>GYRA_NEIGO</name>
<accession>P48371</accession>
<evidence type="ECO:0000255" key="1">
    <source>
        <dbReference type="HAMAP-Rule" id="MF_01897"/>
    </source>
</evidence>
<evidence type="ECO:0000255" key="2">
    <source>
        <dbReference type="PROSITE-ProRule" id="PRU01384"/>
    </source>
</evidence>
<evidence type="ECO:0000256" key="3">
    <source>
        <dbReference type="SAM" id="MobiDB-lite"/>
    </source>
</evidence>
<proteinExistence type="inferred from homology"/>
<reference key="1">
    <citation type="journal article" date="1994" name="Mol. Microbiol.">
        <title>Neisseria gonorrhoeae acquires mutations in analogous regions of gyrA and parC in fluoroquinolone-resistant isolates.</title>
        <authorList>
            <person name="Belland R.J."/>
            <person name="Morrison S.G."/>
            <person name="Ison C."/>
            <person name="Huang W.M."/>
        </authorList>
    </citation>
    <scope>NUCLEOTIDE SEQUENCE [GENOMIC DNA]</scope>
    <source>
        <strain>MS11</strain>
    </source>
</reference>
<feature type="chain" id="PRO_0000145244" description="DNA gyrase subunit A">
    <location>
        <begin position="1"/>
        <end position="916"/>
    </location>
</feature>
<feature type="domain" description="Topo IIA-type catalytic" evidence="2">
    <location>
        <begin position="42"/>
        <end position="544"/>
    </location>
</feature>
<feature type="region of interest" description="Disordered" evidence="3">
    <location>
        <begin position="739"/>
        <end position="774"/>
    </location>
</feature>
<feature type="region of interest" description="Disordered" evidence="3">
    <location>
        <begin position="897"/>
        <end position="916"/>
    </location>
</feature>
<feature type="short sequence motif" description="GyrA-box" evidence="1">
    <location>
        <begin position="571"/>
        <end position="577"/>
    </location>
</feature>
<feature type="compositionally biased region" description="Acidic residues" evidence="3">
    <location>
        <begin position="739"/>
        <end position="748"/>
    </location>
</feature>
<feature type="active site" description="O-(5'-phospho-DNA)-tyrosine intermediate" evidence="1">
    <location>
        <position position="130"/>
    </location>
</feature>
<dbReference type="EC" id="5.6.2.2" evidence="1"/>
<dbReference type="EMBL" id="U08817">
    <property type="protein sequence ID" value="AAA82128.1"/>
    <property type="molecule type" value="Genomic_DNA"/>
</dbReference>
<dbReference type="PIR" id="S60779">
    <property type="entry name" value="S60779"/>
</dbReference>
<dbReference type="SMR" id="P48371"/>
<dbReference type="ChEMBL" id="CHEMBL2311244"/>
<dbReference type="DrugCentral" id="P48371"/>
<dbReference type="GO" id="GO:0005694">
    <property type="term" value="C:chromosome"/>
    <property type="evidence" value="ECO:0007669"/>
    <property type="project" value="InterPro"/>
</dbReference>
<dbReference type="GO" id="GO:0005737">
    <property type="term" value="C:cytoplasm"/>
    <property type="evidence" value="ECO:0007669"/>
    <property type="project" value="UniProtKB-SubCell"/>
</dbReference>
<dbReference type="GO" id="GO:0009330">
    <property type="term" value="C:DNA topoisomerase type II (double strand cut, ATP-hydrolyzing) complex"/>
    <property type="evidence" value="ECO:0007669"/>
    <property type="project" value="TreeGrafter"/>
</dbReference>
<dbReference type="GO" id="GO:0005524">
    <property type="term" value="F:ATP binding"/>
    <property type="evidence" value="ECO:0007669"/>
    <property type="project" value="UniProtKB-UniRule"/>
</dbReference>
<dbReference type="GO" id="GO:0003677">
    <property type="term" value="F:DNA binding"/>
    <property type="evidence" value="ECO:0007669"/>
    <property type="project" value="UniProtKB-UniRule"/>
</dbReference>
<dbReference type="GO" id="GO:0034335">
    <property type="term" value="F:DNA negative supercoiling activity"/>
    <property type="evidence" value="ECO:0007669"/>
    <property type="project" value="UniProtKB-ARBA"/>
</dbReference>
<dbReference type="GO" id="GO:0006265">
    <property type="term" value="P:DNA topological change"/>
    <property type="evidence" value="ECO:0007669"/>
    <property type="project" value="UniProtKB-UniRule"/>
</dbReference>
<dbReference type="GO" id="GO:0006261">
    <property type="term" value="P:DNA-templated DNA replication"/>
    <property type="evidence" value="ECO:0007669"/>
    <property type="project" value="UniProtKB-UniRule"/>
</dbReference>
<dbReference type="CDD" id="cd00187">
    <property type="entry name" value="TOP4c"/>
    <property type="match status" value="1"/>
</dbReference>
<dbReference type="FunFam" id="3.30.1360.40:FF:000002">
    <property type="entry name" value="DNA gyrase subunit A"/>
    <property type="match status" value="1"/>
</dbReference>
<dbReference type="FunFam" id="3.90.199.10:FF:000001">
    <property type="entry name" value="DNA gyrase subunit A"/>
    <property type="match status" value="1"/>
</dbReference>
<dbReference type="Gene3D" id="3.30.1360.40">
    <property type="match status" value="1"/>
</dbReference>
<dbReference type="Gene3D" id="2.120.10.90">
    <property type="entry name" value="DNA gyrase/topoisomerase IV, subunit A, C-terminal"/>
    <property type="match status" value="1"/>
</dbReference>
<dbReference type="Gene3D" id="3.90.199.10">
    <property type="entry name" value="Topoisomerase II, domain 5"/>
    <property type="match status" value="1"/>
</dbReference>
<dbReference type="Gene3D" id="1.10.268.10">
    <property type="entry name" value="Topoisomerase, domain 3"/>
    <property type="match status" value="1"/>
</dbReference>
<dbReference type="HAMAP" id="MF_01897">
    <property type="entry name" value="GyrA"/>
    <property type="match status" value="1"/>
</dbReference>
<dbReference type="InterPro" id="IPR005743">
    <property type="entry name" value="GyrA"/>
</dbReference>
<dbReference type="InterPro" id="IPR006691">
    <property type="entry name" value="GyrA/parC_rep"/>
</dbReference>
<dbReference type="InterPro" id="IPR035516">
    <property type="entry name" value="Gyrase/topoIV_suA_C"/>
</dbReference>
<dbReference type="InterPro" id="IPR013760">
    <property type="entry name" value="Topo_IIA-like_dom_sf"/>
</dbReference>
<dbReference type="InterPro" id="IPR013758">
    <property type="entry name" value="Topo_IIA_A/C_ab"/>
</dbReference>
<dbReference type="InterPro" id="IPR013757">
    <property type="entry name" value="Topo_IIA_A_a_sf"/>
</dbReference>
<dbReference type="InterPro" id="IPR002205">
    <property type="entry name" value="Topo_IIA_dom_A"/>
</dbReference>
<dbReference type="InterPro" id="IPR050220">
    <property type="entry name" value="Type_II_DNA_Topoisomerases"/>
</dbReference>
<dbReference type="NCBIfam" id="TIGR01063">
    <property type="entry name" value="gyrA"/>
    <property type="match status" value="1"/>
</dbReference>
<dbReference type="NCBIfam" id="NF004043">
    <property type="entry name" value="PRK05560.1"/>
    <property type="match status" value="1"/>
</dbReference>
<dbReference type="NCBIfam" id="NF004044">
    <property type="entry name" value="PRK05561.1"/>
    <property type="match status" value="1"/>
</dbReference>
<dbReference type="PANTHER" id="PTHR43493:SF5">
    <property type="entry name" value="DNA GYRASE SUBUNIT A, CHLOROPLASTIC_MITOCHONDRIAL"/>
    <property type="match status" value="1"/>
</dbReference>
<dbReference type="PANTHER" id="PTHR43493">
    <property type="entry name" value="DNA GYRASE/TOPOISOMERASE SUBUNIT A"/>
    <property type="match status" value="1"/>
</dbReference>
<dbReference type="Pfam" id="PF03989">
    <property type="entry name" value="DNA_gyraseA_C"/>
    <property type="match status" value="7"/>
</dbReference>
<dbReference type="Pfam" id="PF00521">
    <property type="entry name" value="DNA_topoisoIV"/>
    <property type="match status" value="1"/>
</dbReference>
<dbReference type="SMART" id="SM00434">
    <property type="entry name" value="TOP4c"/>
    <property type="match status" value="1"/>
</dbReference>
<dbReference type="SUPFAM" id="SSF101904">
    <property type="entry name" value="GyrA/ParC C-terminal domain-like"/>
    <property type="match status" value="1"/>
</dbReference>
<dbReference type="SUPFAM" id="SSF56719">
    <property type="entry name" value="Type II DNA topoisomerase"/>
    <property type="match status" value="1"/>
</dbReference>
<dbReference type="PROSITE" id="PS52040">
    <property type="entry name" value="TOPO_IIA"/>
    <property type="match status" value="1"/>
</dbReference>
<organism>
    <name type="scientific">Neisseria gonorrhoeae</name>
    <dbReference type="NCBI Taxonomy" id="485"/>
    <lineage>
        <taxon>Bacteria</taxon>
        <taxon>Pseudomonadati</taxon>
        <taxon>Pseudomonadota</taxon>
        <taxon>Betaproteobacteria</taxon>
        <taxon>Neisseriales</taxon>
        <taxon>Neisseriaceae</taxon>
        <taxon>Neisseria</taxon>
    </lineage>
</organism>
<protein>
    <recommendedName>
        <fullName evidence="1">DNA gyrase subunit A</fullName>
        <ecNumber evidence="1">5.6.2.2</ecNumber>
    </recommendedName>
</protein>
<gene>
    <name evidence="1" type="primary">gyrA</name>
</gene>
<keyword id="KW-0067">ATP-binding</keyword>
<keyword id="KW-0963">Cytoplasm</keyword>
<keyword id="KW-0238">DNA-binding</keyword>
<keyword id="KW-0413">Isomerase</keyword>
<keyword id="KW-0547">Nucleotide-binding</keyword>
<keyword id="KW-0799">Topoisomerase</keyword>
<sequence length="916" mass="101530">MTDATIRHDHKFALETLPVSLEDEMRKSYLDYAMSVIVGRALPDVRDGLKPVHRRVLYAMHELKNNWNAAYKKSARIVGDVIGKYHPHGDSAVYDTIVRMAQNFAMRYVLIDGQGNFGSVDGLAAAAMRYTEIRMAKISHEMLADIEEETVNFGPNYDGSEHEPLVLPTRFPTLLVNGSSGIAVGMATNIPPHNLTDTINACLRLLDEPKTEIDELIDIIQAPDFPTGATIYGLGGVREGYKTGRGRVVMRGKTHIEPIGKNGERERIVIDEIPYQVNKAKLVEKIGDLVREKTLEGISELRDESDKSGMRVVIELKRNENAEVVLNQLYKLTPLQDSFGINMVVLVDGQPRLLNLKQILSEFLRHRREVVTRRTLFRLKKARHEGHIAERKAVALSNIDEIIKLIKESPNAAEAKEKLLARPWASSLVEEMLTRSGLDLEMMRPEGLVANIGLKKQGYYLSEIQADAILRMSLRNLTGLDQKEIIESYKNLMGKIIDFVDILSKPERITQIIRDELEEIKTNYGDERRSEINPFGGDIADEDLIPQREMVVTLTHGGYIKTQPTTDYQAQRRGGRGKQAAATKDEDFIETLFVANTHDYLMCFTNLGKCHWIKVYKLPEGGRNSRGRPINNVIQLEEGEKVSAILAVREFPEDQYVFFATAQGMVKKVQLSAFKNVRAQGIKAIALKEGDYLVGAAQTGGADDIMLFSNLGKAIRFNEYWEKSGNDEAEDADIETEISDDLEDETADNENTLPSGKNGVRPSGRGSGGLRGMRLPADGKIVSLITFAPETEESGLQVLTATANGYGKRTPIADYSRKNKGGQGSIAINTGERNGDLVAATLVGETDDLMLITSGGVLIRTKVEQIRETGRAAAGVKLINLDEGETLVSLERVAEDESELSGASVISNVTEPEAEN</sequence>
<comment type="function">
    <text evidence="1">A type II topoisomerase that negatively supercoils closed circular double-stranded (ds) DNA in an ATP-dependent manner to modulate DNA topology and maintain chromosomes in an underwound state. Negative supercoiling favors strand separation, and DNA replication, transcription, recombination and repair, all of which involve strand separation. Also able to catalyze the interconversion of other topological isomers of dsDNA rings, including catenanes and knotted rings. Type II topoisomerases break and join 2 DNA strands simultaneously in an ATP-dependent manner.</text>
</comment>
<comment type="catalytic activity">
    <reaction evidence="1">
        <text>ATP-dependent breakage, passage and rejoining of double-stranded DNA.</text>
        <dbReference type="EC" id="5.6.2.2"/>
    </reaction>
</comment>
<comment type="subunit">
    <text evidence="1">Heterotetramer, composed of two GyrA and two GyrB chains. In the heterotetramer, GyrA contains the active site tyrosine that forms a transient covalent intermediate with DNA, while GyrB binds cofactors and catalyzes ATP hydrolysis.</text>
</comment>
<comment type="subcellular location">
    <subcellularLocation>
        <location evidence="1">Cytoplasm</location>
    </subcellularLocation>
</comment>
<comment type="miscellaneous">
    <text evidence="1">Few gyrases are as efficient as E.coli at forming negative supercoils. Not all organisms have 2 type II topoisomerases; in organisms with a single type II topoisomerase this enzyme also has to decatenate newly replicated chromosomes.</text>
</comment>
<comment type="similarity">
    <text evidence="1">Belongs to the type II topoisomerase GyrA/ParC subunit family.</text>
</comment>